<name>MOC2B_ARATH</name>
<sequence>MSAEEKNLIEILEEGHKVDVVKYIDYVSAPQAGAIATFSGTTRDMFEGKTVLELRYEAYVPMATRCLSSICTTARSTWDIHKIAVAHRLGPVPVGETSVLIAVSSVHRADGLDACKFLIDELKASVPIWKKEVYTNGEIWKENSEFMEKRLELAEKRDSIVKKTVVEEHRRRGCCGSKVRVEEDEEHKDITGDNKSSS</sequence>
<reference key="1">
    <citation type="journal article" date="2000" name="Gene">
        <title>Genomic and functional characterization of the oas gene family encoding O-acetylserine (thiol) lyases, enzymes catalyzing the final step in cysteine biosynthesis in Arabidopsis thaliana.</title>
        <authorList>
            <person name="Jost R."/>
            <person name="Berkowitz O."/>
            <person name="Wirtz M."/>
            <person name="Hopkins L."/>
            <person name="Hawkesford M.J."/>
            <person name="Hell R."/>
        </authorList>
    </citation>
    <scope>NUCLEOTIDE SEQUENCE [GENOMIC DNA]</scope>
    <source>
        <strain>cv. Columbia</strain>
    </source>
</reference>
<reference key="2">
    <citation type="submission" date="1999-03" db="EMBL/GenBank/DDBJ databases">
        <title>The EST clone 246M14T7 (accession W43091) encodes the large subunit of the molybdopterin-synthase, an enzyme involved in molybdenum cofactor biosynthesis.</title>
        <authorList>
            <person name="Brinkmann H."/>
            <person name="Riedel B."/>
            <person name="Schledzewski K."/>
            <person name="Mendel R.R."/>
        </authorList>
    </citation>
    <scope>NUCLEOTIDE SEQUENCE [MRNA]</scope>
</reference>
<reference key="3">
    <citation type="journal article" date="1999" name="Nature">
        <title>Sequence and analysis of chromosome 2 of the plant Arabidopsis thaliana.</title>
        <authorList>
            <person name="Lin X."/>
            <person name="Kaul S."/>
            <person name="Rounsley S.D."/>
            <person name="Shea T.P."/>
            <person name="Benito M.-I."/>
            <person name="Town C.D."/>
            <person name="Fujii C.Y."/>
            <person name="Mason T.M."/>
            <person name="Bowman C.L."/>
            <person name="Barnstead M.E."/>
            <person name="Feldblyum T.V."/>
            <person name="Buell C.R."/>
            <person name="Ketchum K.A."/>
            <person name="Lee J.J."/>
            <person name="Ronning C.M."/>
            <person name="Koo H.L."/>
            <person name="Moffat K.S."/>
            <person name="Cronin L.A."/>
            <person name="Shen M."/>
            <person name="Pai G."/>
            <person name="Van Aken S."/>
            <person name="Umayam L."/>
            <person name="Tallon L.J."/>
            <person name="Gill J.E."/>
            <person name="Adams M.D."/>
            <person name="Carrera A.J."/>
            <person name="Creasy T.H."/>
            <person name="Goodman H.M."/>
            <person name="Somerville C.R."/>
            <person name="Copenhaver G.P."/>
            <person name="Preuss D."/>
            <person name="Nierman W.C."/>
            <person name="White O."/>
            <person name="Eisen J.A."/>
            <person name="Salzberg S.L."/>
            <person name="Fraser C.M."/>
            <person name="Venter J.C."/>
        </authorList>
    </citation>
    <scope>NUCLEOTIDE SEQUENCE [LARGE SCALE GENOMIC DNA]</scope>
    <source>
        <strain>cv. Columbia</strain>
    </source>
</reference>
<reference key="4">
    <citation type="journal article" date="2017" name="Plant J.">
        <title>Araport11: a complete reannotation of the Arabidopsis thaliana reference genome.</title>
        <authorList>
            <person name="Cheng C.Y."/>
            <person name="Krishnakumar V."/>
            <person name="Chan A.P."/>
            <person name="Thibaud-Nissen F."/>
            <person name="Schobel S."/>
            <person name="Town C.D."/>
        </authorList>
    </citation>
    <scope>GENOME REANNOTATION</scope>
    <source>
        <strain>cv. Columbia</strain>
    </source>
</reference>
<reference key="5">
    <citation type="journal article" date="2003" name="Science">
        <title>Empirical analysis of transcriptional activity in the Arabidopsis genome.</title>
        <authorList>
            <person name="Yamada K."/>
            <person name="Lim J."/>
            <person name="Dale J.M."/>
            <person name="Chen H."/>
            <person name="Shinn P."/>
            <person name="Palm C.J."/>
            <person name="Southwick A.M."/>
            <person name="Wu H.C."/>
            <person name="Kim C.J."/>
            <person name="Nguyen M."/>
            <person name="Pham P.K."/>
            <person name="Cheuk R.F."/>
            <person name="Karlin-Newmann G."/>
            <person name="Liu S.X."/>
            <person name="Lam B."/>
            <person name="Sakano H."/>
            <person name="Wu T."/>
            <person name="Yu G."/>
            <person name="Miranda M."/>
            <person name="Quach H.L."/>
            <person name="Tripp M."/>
            <person name="Chang C.H."/>
            <person name="Lee J.M."/>
            <person name="Toriumi M.J."/>
            <person name="Chan M.M."/>
            <person name="Tang C.C."/>
            <person name="Onodera C.S."/>
            <person name="Deng J.M."/>
            <person name="Akiyama K."/>
            <person name="Ansari Y."/>
            <person name="Arakawa T."/>
            <person name="Banh J."/>
            <person name="Banno F."/>
            <person name="Bowser L."/>
            <person name="Brooks S.Y."/>
            <person name="Carninci P."/>
            <person name="Chao Q."/>
            <person name="Choy N."/>
            <person name="Enju A."/>
            <person name="Goldsmith A.D."/>
            <person name="Gurjal M."/>
            <person name="Hansen N.F."/>
            <person name="Hayashizaki Y."/>
            <person name="Johnson-Hopson C."/>
            <person name="Hsuan V.W."/>
            <person name="Iida K."/>
            <person name="Karnes M."/>
            <person name="Khan S."/>
            <person name="Koesema E."/>
            <person name="Ishida J."/>
            <person name="Jiang P.X."/>
            <person name="Jones T."/>
            <person name="Kawai J."/>
            <person name="Kamiya A."/>
            <person name="Meyers C."/>
            <person name="Nakajima M."/>
            <person name="Narusaka M."/>
            <person name="Seki M."/>
            <person name="Sakurai T."/>
            <person name="Satou M."/>
            <person name="Tamse R."/>
            <person name="Vaysberg M."/>
            <person name="Wallender E.K."/>
            <person name="Wong C."/>
            <person name="Yamamura Y."/>
            <person name="Yuan S."/>
            <person name="Shinozaki K."/>
            <person name="Davis R.W."/>
            <person name="Theologis A."/>
            <person name="Ecker J.R."/>
        </authorList>
    </citation>
    <scope>NUCLEOTIDE SEQUENCE [LARGE SCALE MRNA]</scope>
    <source>
        <strain>cv. Columbia</strain>
    </source>
</reference>
<reference key="6">
    <citation type="journal article" date="2009" name="DNA Res.">
        <title>Analysis of multiple occurrences of alternative splicing events in Arabidopsis thaliana using novel sequenced full-length cDNAs.</title>
        <authorList>
            <person name="Iida K."/>
            <person name="Fukami-Kobayashi K."/>
            <person name="Toyoda A."/>
            <person name="Sakaki Y."/>
            <person name="Kobayashi M."/>
            <person name="Seki M."/>
            <person name="Shinozaki K."/>
        </authorList>
    </citation>
    <scope>NUCLEOTIDE SEQUENCE [LARGE SCALE MRNA]</scope>
    <source>
        <strain>cv. Columbia</strain>
    </source>
</reference>
<protein>
    <recommendedName>
        <fullName evidence="1">Molybdopterin synthase catalytic subunit</fullName>
        <ecNumber evidence="1">2.8.1.12</ecNumber>
    </recommendedName>
    <alternativeName>
        <fullName evidence="1">Molybdenum cofactor synthesis protein 2 large subunit</fullName>
    </alternativeName>
    <alternativeName>
        <fullName evidence="1">Molybdenum cofactor synthesis protein 2B</fullName>
        <shortName evidence="1">MOCS2B</shortName>
    </alternativeName>
</protein>
<gene>
    <name evidence="1" type="primary">MOCS2</name>
    <name type="synonym">CNX6</name>
    <name type="ordered locus">At2g43760</name>
    <name type="ORF">F18O19.13</name>
</gene>
<keyword id="KW-0963">Cytoplasm</keyword>
<keyword id="KW-0501">Molybdenum cofactor biosynthesis</keyword>
<keyword id="KW-1185">Reference proteome</keyword>
<keyword id="KW-0808">Transferase</keyword>
<organism>
    <name type="scientific">Arabidopsis thaliana</name>
    <name type="common">Mouse-ear cress</name>
    <dbReference type="NCBI Taxonomy" id="3702"/>
    <lineage>
        <taxon>Eukaryota</taxon>
        <taxon>Viridiplantae</taxon>
        <taxon>Streptophyta</taxon>
        <taxon>Embryophyta</taxon>
        <taxon>Tracheophyta</taxon>
        <taxon>Spermatophyta</taxon>
        <taxon>Magnoliopsida</taxon>
        <taxon>eudicotyledons</taxon>
        <taxon>Gunneridae</taxon>
        <taxon>Pentapetalae</taxon>
        <taxon>rosids</taxon>
        <taxon>malvids</taxon>
        <taxon>Brassicales</taxon>
        <taxon>Brassicaceae</taxon>
        <taxon>Camelineae</taxon>
        <taxon>Arabidopsis</taxon>
    </lineage>
</organism>
<dbReference type="EC" id="2.8.1.12" evidence="1"/>
<dbReference type="EMBL" id="AJ271728">
    <property type="protein sequence ID" value="CAB71291.1"/>
    <property type="molecule type" value="Genomic_DNA"/>
</dbReference>
<dbReference type="EMBL" id="AJ133519">
    <property type="protein sequence ID" value="CAB38428.1"/>
    <property type="molecule type" value="mRNA"/>
</dbReference>
<dbReference type="EMBL" id="AC002333">
    <property type="protein sequence ID" value="AAB64030.1"/>
    <property type="molecule type" value="Genomic_DNA"/>
</dbReference>
<dbReference type="EMBL" id="CP002685">
    <property type="protein sequence ID" value="AEC10319.1"/>
    <property type="molecule type" value="Genomic_DNA"/>
</dbReference>
<dbReference type="EMBL" id="CP002685">
    <property type="protein sequence ID" value="AEC10320.1"/>
    <property type="molecule type" value="Genomic_DNA"/>
</dbReference>
<dbReference type="EMBL" id="CP002685">
    <property type="protein sequence ID" value="AEC10321.1"/>
    <property type="molecule type" value="Genomic_DNA"/>
</dbReference>
<dbReference type="EMBL" id="AF361842">
    <property type="protein sequence ID" value="AAK32854.1"/>
    <property type="molecule type" value="mRNA"/>
</dbReference>
<dbReference type="EMBL" id="BT001126">
    <property type="protein sequence ID" value="AAN64517.1"/>
    <property type="molecule type" value="mRNA"/>
</dbReference>
<dbReference type="EMBL" id="AK317154">
    <property type="protein sequence ID" value="BAH19840.1"/>
    <property type="molecule type" value="mRNA"/>
</dbReference>
<dbReference type="PIR" id="B84870">
    <property type="entry name" value="B84870"/>
</dbReference>
<dbReference type="RefSeq" id="NP_001078051.1">
    <property type="nucleotide sequence ID" value="NM_001084582.2"/>
</dbReference>
<dbReference type="RefSeq" id="NP_001118518.1">
    <property type="nucleotide sequence ID" value="NM_001125046.2"/>
</dbReference>
<dbReference type="RefSeq" id="NP_181904.1">
    <property type="nucleotide sequence ID" value="NM_129938.4"/>
</dbReference>
<dbReference type="SMR" id="O22827"/>
<dbReference type="BioGRID" id="4315">
    <property type="interactions" value="2"/>
</dbReference>
<dbReference type="FunCoup" id="O22827">
    <property type="interactions" value="1647"/>
</dbReference>
<dbReference type="STRING" id="3702.O22827"/>
<dbReference type="iPTMnet" id="O22827"/>
<dbReference type="PaxDb" id="3702-AT2G43760.1"/>
<dbReference type="ProteomicsDB" id="239062"/>
<dbReference type="DNASU" id="818979"/>
<dbReference type="EnsemblPlants" id="AT2G43760.1">
    <property type="protein sequence ID" value="AT2G43760.1"/>
    <property type="gene ID" value="AT2G43760"/>
</dbReference>
<dbReference type="EnsemblPlants" id="AT2G43760.2">
    <property type="protein sequence ID" value="AT2G43760.2"/>
    <property type="gene ID" value="AT2G43760"/>
</dbReference>
<dbReference type="EnsemblPlants" id="AT2G43760.3">
    <property type="protein sequence ID" value="AT2G43760.3"/>
    <property type="gene ID" value="AT2G43760"/>
</dbReference>
<dbReference type="GeneID" id="818979"/>
<dbReference type="Gramene" id="AT2G43760.1">
    <property type="protein sequence ID" value="AT2G43760.1"/>
    <property type="gene ID" value="AT2G43760"/>
</dbReference>
<dbReference type="Gramene" id="AT2G43760.2">
    <property type="protein sequence ID" value="AT2G43760.2"/>
    <property type="gene ID" value="AT2G43760"/>
</dbReference>
<dbReference type="Gramene" id="AT2G43760.3">
    <property type="protein sequence ID" value="AT2G43760.3"/>
    <property type="gene ID" value="AT2G43760"/>
</dbReference>
<dbReference type="KEGG" id="ath:AT2G43760"/>
<dbReference type="Araport" id="AT2G43760"/>
<dbReference type="TAIR" id="AT2G43760">
    <property type="gene designation" value="CNX6"/>
</dbReference>
<dbReference type="eggNOG" id="KOG3307">
    <property type="taxonomic scope" value="Eukaryota"/>
</dbReference>
<dbReference type="HOGENOM" id="CLU_089568_0_0_1"/>
<dbReference type="InParanoid" id="O22827"/>
<dbReference type="OMA" id="WKREEFG"/>
<dbReference type="PhylomeDB" id="O22827"/>
<dbReference type="BioCyc" id="ARA:AT2G43760-MONOMER"/>
<dbReference type="BioCyc" id="MetaCyc:AT2G43760-MONOMER"/>
<dbReference type="UniPathway" id="UPA00344"/>
<dbReference type="PRO" id="PR:O22827"/>
<dbReference type="Proteomes" id="UP000006548">
    <property type="component" value="Chromosome 2"/>
</dbReference>
<dbReference type="ExpressionAtlas" id="O22827">
    <property type="expression patterns" value="baseline and differential"/>
</dbReference>
<dbReference type="GO" id="GO:1990140">
    <property type="term" value="C:molybdopterin synthase complex"/>
    <property type="evidence" value="ECO:0000250"/>
    <property type="project" value="UniProtKB"/>
</dbReference>
<dbReference type="GO" id="GO:0030366">
    <property type="term" value="F:molybdopterin synthase activity"/>
    <property type="evidence" value="ECO:0007669"/>
    <property type="project" value="UniProtKB-UniRule"/>
</dbReference>
<dbReference type="GO" id="GO:0006777">
    <property type="term" value="P:Mo-molybdopterin cofactor biosynthetic process"/>
    <property type="evidence" value="ECO:0000250"/>
    <property type="project" value="UniProtKB"/>
</dbReference>
<dbReference type="CDD" id="cd00756">
    <property type="entry name" value="MoaE"/>
    <property type="match status" value="1"/>
</dbReference>
<dbReference type="FunFam" id="3.90.1170.40:FF:000002">
    <property type="entry name" value="Molybdopterin synthase catalytic subunit"/>
    <property type="match status" value="1"/>
</dbReference>
<dbReference type="Gene3D" id="3.90.1170.40">
    <property type="entry name" value="Molybdopterin biosynthesis MoaE subunit"/>
    <property type="match status" value="1"/>
</dbReference>
<dbReference type="HAMAP" id="MF_03052">
    <property type="entry name" value="MOC2B"/>
    <property type="match status" value="1"/>
</dbReference>
<dbReference type="InterPro" id="IPR036563">
    <property type="entry name" value="MoaE_sf"/>
</dbReference>
<dbReference type="InterPro" id="IPR028888">
    <property type="entry name" value="MOCS2B_euk"/>
</dbReference>
<dbReference type="InterPro" id="IPR003448">
    <property type="entry name" value="Mopterin_biosynth_MoaE"/>
</dbReference>
<dbReference type="PANTHER" id="PTHR23404">
    <property type="entry name" value="MOLYBDOPTERIN SYNTHASE RELATED"/>
    <property type="match status" value="1"/>
</dbReference>
<dbReference type="Pfam" id="PF02391">
    <property type="entry name" value="MoaE"/>
    <property type="match status" value="1"/>
</dbReference>
<dbReference type="SUPFAM" id="SSF54690">
    <property type="entry name" value="Molybdopterin synthase subunit MoaE"/>
    <property type="match status" value="1"/>
</dbReference>
<feature type="chain" id="PRO_0000369345" description="Molybdopterin synthase catalytic subunit">
    <location>
        <begin position="1"/>
        <end position="198"/>
    </location>
</feature>
<feature type="binding site" evidence="1">
    <location>
        <begin position="107"/>
        <end position="108"/>
    </location>
    <ligand>
        <name>substrate</name>
    </ligand>
</feature>
<feature type="binding site" evidence="1">
    <location>
        <position position="123"/>
    </location>
    <ligand>
        <name>substrate</name>
    </ligand>
</feature>
<feature type="binding site" evidence="1">
    <location>
        <begin position="130"/>
        <end position="132"/>
    </location>
    <ligand>
        <name>substrate</name>
    </ligand>
</feature>
<proteinExistence type="evidence at transcript level"/>
<comment type="function">
    <text evidence="1">Catalytic subunit of the molybdopterin synthase complex, a complex that catalyzes the conversion of precursor Z into molybdopterin. Acts by mediating the incorporation of 2 sulfur atoms from thiocarboxylated MOCS2A into precursor Z to generate a dithiolene group.</text>
</comment>
<comment type="catalytic activity">
    <reaction evidence="1">
        <text>2 [molybdopterin-synthase sulfur-carrier protein]-C-terminal-Gly-aminoethanethioate + cyclic pyranopterin phosphate + H2O = molybdopterin + 2 [molybdopterin-synthase sulfur-carrier protein]-C-terminal Gly-Gly + 2 H(+)</text>
        <dbReference type="Rhea" id="RHEA:26333"/>
        <dbReference type="Rhea" id="RHEA-COMP:12202"/>
        <dbReference type="Rhea" id="RHEA-COMP:19907"/>
        <dbReference type="ChEBI" id="CHEBI:15377"/>
        <dbReference type="ChEBI" id="CHEBI:15378"/>
        <dbReference type="ChEBI" id="CHEBI:58698"/>
        <dbReference type="ChEBI" id="CHEBI:59648"/>
        <dbReference type="ChEBI" id="CHEBI:90778"/>
        <dbReference type="ChEBI" id="CHEBI:232372"/>
        <dbReference type="EC" id="2.8.1.12"/>
    </reaction>
</comment>
<comment type="pathway">
    <text evidence="1">Cofactor biosynthesis; molybdopterin biosynthesis.</text>
</comment>
<comment type="subunit">
    <text evidence="1">Heterotetramer; composed of 2 small (MOCS2A) and 2 large (MOCS2B) subunits.</text>
</comment>
<comment type="subcellular location">
    <subcellularLocation>
        <location evidence="1">Cytoplasm</location>
    </subcellularLocation>
</comment>
<comment type="similarity">
    <text evidence="1">Belongs to the MoaE family. MOCS2B subfamily.</text>
</comment>
<evidence type="ECO:0000255" key="1">
    <source>
        <dbReference type="HAMAP-Rule" id="MF_03052"/>
    </source>
</evidence>
<accession>O22827</accession>